<sequence length="247" mass="28538">MAETKNWYNTREAIEKTSPSRLDGINLKEETFQRWSYTSFLQELGQRLNNPQKTIATAIVLCQRFFTRQSLTKNDPKTVAIICMFIAGKVEGSPRPAGDVVFVSYRVLFNKEPLRDVFERLKMTVLTGEKLVLSTLECDLEIEHPYKLVMDWVKRSVKTEDGRRLCQAAFNFVNDSLRTSLCLQFGPSQIASAAIYIGLSMCKMTLPCDGDKAWWREFDVTKRQLWEICDQMLDLYVQDFVVPRHGL</sequence>
<accession>Q9C8P7</accession>
<proteinExistence type="inferred from homology"/>
<organism>
    <name type="scientific">Arabidopsis thaliana</name>
    <name type="common">Mouse-ear cress</name>
    <dbReference type="NCBI Taxonomy" id="3702"/>
    <lineage>
        <taxon>Eukaryota</taxon>
        <taxon>Viridiplantae</taxon>
        <taxon>Streptophyta</taxon>
        <taxon>Embryophyta</taxon>
        <taxon>Tracheophyta</taxon>
        <taxon>Spermatophyta</taxon>
        <taxon>Magnoliopsida</taxon>
        <taxon>eudicotyledons</taxon>
        <taxon>Gunneridae</taxon>
        <taxon>Pentapetalae</taxon>
        <taxon>rosids</taxon>
        <taxon>malvids</taxon>
        <taxon>Brassicales</taxon>
        <taxon>Brassicaceae</taxon>
        <taxon>Camelineae</taxon>
        <taxon>Arabidopsis</taxon>
    </lineage>
</organism>
<name>CCT11_ARATH</name>
<comment type="similarity">
    <text evidence="1">Belongs to the cyclin family. Cyclin T subfamily.</text>
</comment>
<feature type="chain" id="PRO_0000287053" description="Putative cyclin-T1-1">
    <location>
        <begin position="1"/>
        <end position="247"/>
    </location>
</feature>
<gene>
    <name type="primary">CYCT1-1</name>
    <name type="ordered locus">At1g35440</name>
    <name type="ORF">F12A4.13</name>
</gene>
<dbReference type="EMBL" id="AC023064">
    <property type="protein sequence ID" value="AAG52114.1"/>
    <property type="molecule type" value="Genomic_DNA"/>
</dbReference>
<dbReference type="EMBL" id="CP002684">
    <property type="protein sequence ID" value="AEE31794.1"/>
    <property type="molecule type" value="Genomic_DNA"/>
</dbReference>
<dbReference type="PIR" id="E86475">
    <property type="entry name" value="E86475"/>
</dbReference>
<dbReference type="RefSeq" id="NP_174775.1">
    <property type="nucleotide sequence ID" value="NM_103239.1"/>
</dbReference>
<dbReference type="SMR" id="Q9C8P7"/>
<dbReference type="FunCoup" id="Q9C8P7">
    <property type="interactions" value="2115"/>
</dbReference>
<dbReference type="STRING" id="3702.Q9C8P7"/>
<dbReference type="PaxDb" id="3702-AT1G35440.1"/>
<dbReference type="EnsemblPlants" id="AT1G35440.1">
    <property type="protein sequence ID" value="AT1G35440.1"/>
    <property type="gene ID" value="AT1G35440"/>
</dbReference>
<dbReference type="GeneID" id="840436"/>
<dbReference type="Gramene" id="AT1G35440.1">
    <property type="protein sequence ID" value="AT1G35440.1"/>
    <property type="gene ID" value="AT1G35440"/>
</dbReference>
<dbReference type="KEGG" id="ath:AT1G35440"/>
<dbReference type="Araport" id="AT1G35440"/>
<dbReference type="TAIR" id="AT1G35440">
    <property type="gene designation" value="CYCT1"/>
</dbReference>
<dbReference type="eggNOG" id="KOG0834">
    <property type="taxonomic scope" value="Eukaryota"/>
</dbReference>
<dbReference type="HOGENOM" id="CLU_022000_4_1_1"/>
<dbReference type="InParanoid" id="Q9C8P7"/>
<dbReference type="OMA" id="MYDMMKY"/>
<dbReference type="PhylomeDB" id="Q9C8P7"/>
<dbReference type="PRO" id="PR:Q9C8P7"/>
<dbReference type="Proteomes" id="UP000006548">
    <property type="component" value="Chromosome 1"/>
</dbReference>
<dbReference type="ExpressionAtlas" id="Q9C8P7">
    <property type="expression patterns" value="differential"/>
</dbReference>
<dbReference type="GO" id="GO:0016538">
    <property type="term" value="F:cyclin-dependent protein serine/threonine kinase regulator activity"/>
    <property type="evidence" value="ECO:0007669"/>
    <property type="project" value="InterPro"/>
</dbReference>
<dbReference type="GO" id="GO:0051301">
    <property type="term" value="P:cell division"/>
    <property type="evidence" value="ECO:0007669"/>
    <property type="project" value="UniProtKB-KW"/>
</dbReference>
<dbReference type="GO" id="GO:0006357">
    <property type="term" value="P:regulation of transcription by RNA polymerase II"/>
    <property type="evidence" value="ECO:0007669"/>
    <property type="project" value="InterPro"/>
</dbReference>
<dbReference type="CDD" id="cd20588">
    <property type="entry name" value="CYCLIN_AcCycT_rpt2"/>
    <property type="match status" value="1"/>
</dbReference>
<dbReference type="Gene3D" id="1.10.472.10">
    <property type="entry name" value="Cyclin-like"/>
    <property type="match status" value="2"/>
</dbReference>
<dbReference type="InterPro" id="IPR013763">
    <property type="entry name" value="Cyclin-like_dom"/>
</dbReference>
<dbReference type="InterPro" id="IPR036915">
    <property type="entry name" value="Cyclin-like_sf"/>
</dbReference>
<dbReference type="InterPro" id="IPR043198">
    <property type="entry name" value="Cyclin/Ssn8"/>
</dbReference>
<dbReference type="InterPro" id="IPR006671">
    <property type="entry name" value="Cyclin_N"/>
</dbReference>
<dbReference type="PANTHER" id="PTHR10026">
    <property type="entry name" value="CYCLIN"/>
    <property type="match status" value="1"/>
</dbReference>
<dbReference type="Pfam" id="PF00134">
    <property type="entry name" value="Cyclin_N"/>
    <property type="match status" value="1"/>
</dbReference>
<dbReference type="PIRSF" id="PIRSF036580">
    <property type="entry name" value="Cyclin_L"/>
    <property type="match status" value="1"/>
</dbReference>
<dbReference type="SMART" id="SM00385">
    <property type="entry name" value="CYCLIN"/>
    <property type="match status" value="2"/>
</dbReference>
<dbReference type="SUPFAM" id="SSF47954">
    <property type="entry name" value="Cyclin-like"/>
    <property type="match status" value="2"/>
</dbReference>
<evidence type="ECO:0000305" key="1"/>
<protein>
    <recommendedName>
        <fullName>Putative cyclin-T1-1</fullName>
        <shortName>CycT1;1</shortName>
    </recommendedName>
</protein>
<keyword id="KW-0131">Cell cycle</keyword>
<keyword id="KW-0132">Cell division</keyword>
<keyword id="KW-0195">Cyclin</keyword>
<keyword id="KW-1185">Reference proteome</keyword>
<reference key="1">
    <citation type="journal article" date="2000" name="Nature">
        <title>Sequence and analysis of chromosome 1 of the plant Arabidopsis thaliana.</title>
        <authorList>
            <person name="Theologis A."/>
            <person name="Ecker J.R."/>
            <person name="Palm C.J."/>
            <person name="Federspiel N.A."/>
            <person name="Kaul S."/>
            <person name="White O."/>
            <person name="Alonso J."/>
            <person name="Altafi H."/>
            <person name="Araujo R."/>
            <person name="Bowman C.L."/>
            <person name="Brooks S.Y."/>
            <person name="Buehler E."/>
            <person name="Chan A."/>
            <person name="Chao Q."/>
            <person name="Chen H."/>
            <person name="Cheuk R.F."/>
            <person name="Chin C.W."/>
            <person name="Chung M.K."/>
            <person name="Conn L."/>
            <person name="Conway A.B."/>
            <person name="Conway A.R."/>
            <person name="Creasy T.H."/>
            <person name="Dewar K."/>
            <person name="Dunn P."/>
            <person name="Etgu P."/>
            <person name="Feldblyum T.V."/>
            <person name="Feng J.-D."/>
            <person name="Fong B."/>
            <person name="Fujii C.Y."/>
            <person name="Gill J.E."/>
            <person name="Goldsmith A.D."/>
            <person name="Haas B."/>
            <person name="Hansen N.F."/>
            <person name="Hughes B."/>
            <person name="Huizar L."/>
            <person name="Hunter J.L."/>
            <person name="Jenkins J."/>
            <person name="Johnson-Hopson C."/>
            <person name="Khan S."/>
            <person name="Khaykin E."/>
            <person name="Kim C.J."/>
            <person name="Koo H.L."/>
            <person name="Kremenetskaia I."/>
            <person name="Kurtz D.B."/>
            <person name="Kwan A."/>
            <person name="Lam B."/>
            <person name="Langin-Hooper S."/>
            <person name="Lee A."/>
            <person name="Lee J.M."/>
            <person name="Lenz C.A."/>
            <person name="Li J.H."/>
            <person name="Li Y.-P."/>
            <person name="Lin X."/>
            <person name="Liu S.X."/>
            <person name="Liu Z.A."/>
            <person name="Luros J.S."/>
            <person name="Maiti R."/>
            <person name="Marziali A."/>
            <person name="Militscher J."/>
            <person name="Miranda M."/>
            <person name="Nguyen M."/>
            <person name="Nierman W.C."/>
            <person name="Osborne B.I."/>
            <person name="Pai G."/>
            <person name="Peterson J."/>
            <person name="Pham P.K."/>
            <person name="Rizzo M."/>
            <person name="Rooney T."/>
            <person name="Rowley D."/>
            <person name="Sakano H."/>
            <person name="Salzberg S.L."/>
            <person name="Schwartz J.R."/>
            <person name="Shinn P."/>
            <person name="Southwick A.M."/>
            <person name="Sun H."/>
            <person name="Tallon L.J."/>
            <person name="Tambunga G."/>
            <person name="Toriumi M.J."/>
            <person name="Town C.D."/>
            <person name="Utterback T."/>
            <person name="Van Aken S."/>
            <person name="Vaysberg M."/>
            <person name="Vysotskaia V.S."/>
            <person name="Walker M."/>
            <person name="Wu D."/>
            <person name="Yu G."/>
            <person name="Fraser C.M."/>
            <person name="Venter J.C."/>
            <person name="Davis R.W."/>
        </authorList>
    </citation>
    <scope>NUCLEOTIDE SEQUENCE [LARGE SCALE GENOMIC DNA]</scope>
    <source>
        <strain>cv. Columbia</strain>
    </source>
</reference>
<reference key="2">
    <citation type="journal article" date="2017" name="Plant J.">
        <title>Araport11: a complete reannotation of the Arabidopsis thaliana reference genome.</title>
        <authorList>
            <person name="Cheng C.Y."/>
            <person name="Krishnakumar V."/>
            <person name="Chan A.P."/>
            <person name="Thibaud-Nissen F."/>
            <person name="Schobel S."/>
            <person name="Town C.D."/>
        </authorList>
    </citation>
    <scope>GENOME REANNOTATION</scope>
    <source>
        <strain>cv. Columbia</strain>
    </source>
</reference>
<reference key="3">
    <citation type="journal article" date="2004" name="Plant Physiol.">
        <title>Genome-wide analysis of the cyclin family in Arabidopsis and comparative phylogenetic analysis of plant cyclin-like proteins.</title>
        <authorList>
            <person name="Wang G."/>
            <person name="Kong H."/>
            <person name="Sun Y."/>
            <person name="Zhang X."/>
            <person name="Zhang W."/>
            <person name="Altman N."/>
            <person name="dePamphilis C.W."/>
            <person name="Ma H."/>
        </authorList>
    </citation>
    <scope>GENE FAMILY</scope>
    <scope>NOMENCLATURE</scope>
</reference>